<protein>
    <recommendedName>
        <fullName evidence="1">Succinyl-diaminopimelate desuccinylase</fullName>
        <shortName evidence="1">SDAP desuccinylase</shortName>
        <ecNumber evidence="1">3.5.1.18</ecNumber>
    </recommendedName>
    <alternativeName>
        <fullName evidence="1">N-succinyl-LL-2,6-diaminoheptanedioate amidohydrolase</fullName>
    </alternativeName>
</protein>
<keyword id="KW-0028">Amino-acid biosynthesis</keyword>
<keyword id="KW-0170">Cobalt</keyword>
<keyword id="KW-0220">Diaminopimelate biosynthesis</keyword>
<keyword id="KW-0378">Hydrolase</keyword>
<keyword id="KW-0457">Lysine biosynthesis</keyword>
<keyword id="KW-0479">Metal-binding</keyword>
<keyword id="KW-1185">Reference proteome</keyword>
<keyword id="KW-0862">Zinc</keyword>
<comment type="function">
    <text evidence="1">Catalyzes the hydrolysis of N-succinyl-L,L-diaminopimelic acid (SDAP), forming succinate and LL-2,6-diaminopimelate (DAP), an intermediate involved in the bacterial biosynthesis of lysine and meso-diaminopimelic acid, an essential component of bacterial cell walls.</text>
</comment>
<comment type="catalytic activity">
    <reaction evidence="1">
        <text>N-succinyl-(2S,6S)-2,6-diaminopimelate + H2O = (2S,6S)-2,6-diaminopimelate + succinate</text>
        <dbReference type="Rhea" id="RHEA:22608"/>
        <dbReference type="ChEBI" id="CHEBI:15377"/>
        <dbReference type="ChEBI" id="CHEBI:30031"/>
        <dbReference type="ChEBI" id="CHEBI:57609"/>
        <dbReference type="ChEBI" id="CHEBI:58087"/>
        <dbReference type="EC" id="3.5.1.18"/>
    </reaction>
</comment>
<comment type="cofactor">
    <cofactor evidence="1">
        <name>Zn(2+)</name>
        <dbReference type="ChEBI" id="CHEBI:29105"/>
    </cofactor>
    <cofactor evidence="1">
        <name>Co(2+)</name>
        <dbReference type="ChEBI" id="CHEBI:48828"/>
    </cofactor>
    <text evidence="1">Binds 2 Zn(2+) or Co(2+) ions per subunit.</text>
</comment>
<comment type="pathway">
    <text evidence="1">Amino-acid biosynthesis; L-lysine biosynthesis via DAP pathway; LL-2,6-diaminopimelate from (S)-tetrahydrodipicolinate (succinylase route): step 3/3.</text>
</comment>
<comment type="subunit">
    <text evidence="1">Homodimer.</text>
</comment>
<comment type="similarity">
    <text evidence="1">Belongs to the peptidase M20A family. DapE subfamily.</text>
</comment>
<proteinExistence type="inferred from homology"/>
<dbReference type="EC" id="3.5.1.18" evidence="1"/>
<dbReference type="EMBL" id="CP000031">
    <property type="protein sequence ID" value="AAV96559.1"/>
    <property type="molecule type" value="Genomic_DNA"/>
</dbReference>
<dbReference type="RefSeq" id="WP_011049015.1">
    <property type="nucleotide sequence ID" value="NC_003911.12"/>
</dbReference>
<dbReference type="SMR" id="Q5LN80"/>
<dbReference type="STRING" id="246200.SPO3332"/>
<dbReference type="PaxDb" id="246200-SPO3332"/>
<dbReference type="KEGG" id="sil:SPO3332"/>
<dbReference type="eggNOG" id="COG0624">
    <property type="taxonomic scope" value="Bacteria"/>
</dbReference>
<dbReference type="HOGENOM" id="CLU_021802_4_0_5"/>
<dbReference type="OrthoDB" id="9809784at2"/>
<dbReference type="UniPathway" id="UPA00034">
    <property type="reaction ID" value="UER00021"/>
</dbReference>
<dbReference type="Proteomes" id="UP000001023">
    <property type="component" value="Chromosome"/>
</dbReference>
<dbReference type="GO" id="GO:0008777">
    <property type="term" value="F:acetylornithine deacetylase activity"/>
    <property type="evidence" value="ECO:0007669"/>
    <property type="project" value="TreeGrafter"/>
</dbReference>
<dbReference type="GO" id="GO:0050897">
    <property type="term" value="F:cobalt ion binding"/>
    <property type="evidence" value="ECO:0007669"/>
    <property type="project" value="UniProtKB-UniRule"/>
</dbReference>
<dbReference type="GO" id="GO:0009014">
    <property type="term" value="F:succinyl-diaminopimelate desuccinylase activity"/>
    <property type="evidence" value="ECO:0007669"/>
    <property type="project" value="UniProtKB-UniRule"/>
</dbReference>
<dbReference type="GO" id="GO:0008270">
    <property type="term" value="F:zinc ion binding"/>
    <property type="evidence" value="ECO:0007669"/>
    <property type="project" value="UniProtKB-UniRule"/>
</dbReference>
<dbReference type="GO" id="GO:0019877">
    <property type="term" value="P:diaminopimelate biosynthetic process"/>
    <property type="evidence" value="ECO:0007669"/>
    <property type="project" value="UniProtKB-UniRule"/>
</dbReference>
<dbReference type="GO" id="GO:0006526">
    <property type="term" value="P:L-arginine biosynthetic process"/>
    <property type="evidence" value="ECO:0007669"/>
    <property type="project" value="TreeGrafter"/>
</dbReference>
<dbReference type="GO" id="GO:0009089">
    <property type="term" value="P:lysine biosynthetic process via diaminopimelate"/>
    <property type="evidence" value="ECO:0007669"/>
    <property type="project" value="UniProtKB-UniRule"/>
</dbReference>
<dbReference type="CDD" id="cd03891">
    <property type="entry name" value="M20_DapE_proteobac"/>
    <property type="match status" value="1"/>
</dbReference>
<dbReference type="Gene3D" id="3.30.70.360">
    <property type="match status" value="1"/>
</dbReference>
<dbReference type="Gene3D" id="3.40.630.10">
    <property type="entry name" value="Zn peptidases"/>
    <property type="match status" value="1"/>
</dbReference>
<dbReference type="HAMAP" id="MF_01690">
    <property type="entry name" value="DapE"/>
    <property type="match status" value="1"/>
</dbReference>
<dbReference type="InterPro" id="IPR001261">
    <property type="entry name" value="ArgE/DapE_CS"/>
</dbReference>
<dbReference type="InterPro" id="IPR036264">
    <property type="entry name" value="Bact_exopeptidase_dim_dom"/>
</dbReference>
<dbReference type="InterPro" id="IPR005941">
    <property type="entry name" value="DapE_proteobac"/>
</dbReference>
<dbReference type="InterPro" id="IPR002933">
    <property type="entry name" value="Peptidase_M20"/>
</dbReference>
<dbReference type="InterPro" id="IPR011650">
    <property type="entry name" value="Peptidase_M20_dimer"/>
</dbReference>
<dbReference type="InterPro" id="IPR050072">
    <property type="entry name" value="Peptidase_M20A"/>
</dbReference>
<dbReference type="NCBIfam" id="TIGR01246">
    <property type="entry name" value="dapE_proteo"/>
    <property type="match status" value="1"/>
</dbReference>
<dbReference type="NCBIfam" id="NF009557">
    <property type="entry name" value="PRK13009.1"/>
    <property type="match status" value="1"/>
</dbReference>
<dbReference type="PANTHER" id="PTHR43808">
    <property type="entry name" value="ACETYLORNITHINE DEACETYLASE"/>
    <property type="match status" value="1"/>
</dbReference>
<dbReference type="PANTHER" id="PTHR43808:SF31">
    <property type="entry name" value="N-ACETYL-L-CITRULLINE DEACETYLASE"/>
    <property type="match status" value="1"/>
</dbReference>
<dbReference type="Pfam" id="PF07687">
    <property type="entry name" value="M20_dimer"/>
    <property type="match status" value="1"/>
</dbReference>
<dbReference type="Pfam" id="PF01546">
    <property type="entry name" value="Peptidase_M20"/>
    <property type="match status" value="1"/>
</dbReference>
<dbReference type="SUPFAM" id="SSF55031">
    <property type="entry name" value="Bacterial exopeptidase dimerisation domain"/>
    <property type="match status" value="1"/>
</dbReference>
<dbReference type="SUPFAM" id="SSF53187">
    <property type="entry name" value="Zn-dependent exopeptidases"/>
    <property type="match status" value="1"/>
</dbReference>
<dbReference type="PROSITE" id="PS00759">
    <property type="entry name" value="ARGE_DAPE_CPG2_2"/>
    <property type="match status" value="1"/>
</dbReference>
<gene>
    <name evidence="1" type="primary">dapE</name>
    <name type="ordered locus">SPO3332</name>
</gene>
<accession>Q5LN80</accession>
<reference key="1">
    <citation type="journal article" date="2004" name="Nature">
        <title>Genome sequence of Silicibacter pomeroyi reveals adaptations to the marine environment.</title>
        <authorList>
            <person name="Moran M.A."/>
            <person name="Buchan A."/>
            <person name="Gonzalez J.M."/>
            <person name="Heidelberg J.F."/>
            <person name="Whitman W.B."/>
            <person name="Kiene R.P."/>
            <person name="Henriksen J.R."/>
            <person name="King G.M."/>
            <person name="Belas R."/>
            <person name="Fuqua C."/>
            <person name="Brinkac L.M."/>
            <person name="Lewis M."/>
            <person name="Johri S."/>
            <person name="Weaver B."/>
            <person name="Pai G."/>
            <person name="Eisen J.A."/>
            <person name="Rahe E."/>
            <person name="Sheldon W.M."/>
            <person name="Ye W."/>
            <person name="Miller T.R."/>
            <person name="Carlton J."/>
            <person name="Rasko D.A."/>
            <person name="Paulsen I.T."/>
            <person name="Ren Q."/>
            <person name="Daugherty S.C."/>
            <person name="DeBoy R.T."/>
            <person name="Dodson R.J."/>
            <person name="Durkin A.S."/>
            <person name="Madupu R."/>
            <person name="Nelson W.C."/>
            <person name="Sullivan S.A."/>
            <person name="Rosovitz M.J."/>
            <person name="Haft D.H."/>
            <person name="Selengut J."/>
            <person name="Ward N."/>
        </authorList>
    </citation>
    <scope>NUCLEOTIDE SEQUENCE [LARGE SCALE GENOMIC DNA]</scope>
    <source>
        <strain>ATCC 700808 / DSM 15171 / DSS-3</strain>
    </source>
</reference>
<reference key="2">
    <citation type="journal article" date="2014" name="Stand. Genomic Sci.">
        <title>An updated genome annotation for the model marine bacterium Ruegeria pomeroyi DSS-3.</title>
        <authorList>
            <person name="Rivers A.R."/>
            <person name="Smith C.B."/>
            <person name="Moran M.A."/>
        </authorList>
    </citation>
    <scope>GENOME REANNOTATION</scope>
    <source>
        <strain>ATCC 700808 / DSM 15171 / DSS-3</strain>
    </source>
</reference>
<evidence type="ECO:0000255" key="1">
    <source>
        <dbReference type="HAMAP-Rule" id="MF_01690"/>
    </source>
</evidence>
<sequence length="380" mass="40185">MTLDAARLTADLIRCASVTPADDGALDVLERVLSQAGFSCTRVDRGGICNLFARWGDKGHARSFGFNGHTDVVPVGDAAAWTVAPFGAEEKDGFLYGRGATDMKSGVAAFVAAAVDLVTTTPPEGAVIVTITGDEEGDALDGTKALLDYMAASGERMSVCLVGEPTCPDRMGEMIKIGRRGSMTAWFTVTGVQGHSAYPHRAKNPLPAMARLMDRLASHGLDQGTDHFDPSTLAVVTIDTGNTATNVIPAQCRGAVNIRFNDLHSGASLTGWMQGEADRVAEEFGVAVEMKVKISGESFLTPPGELSDLVAAAVEAETGVTPVLSTSGGTSDARFVKDHCPVVEFGLVGRTMHQVDERVEIAQIHQLKAIYGRILRDFFA</sequence>
<organism>
    <name type="scientific">Ruegeria pomeroyi (strain ATCC 700808 / DSM 15171 / DSS-3)</name>
    <name type="common">Silicibacter pomeroyi</name>
    <dbReference type="NCBI Taxonomy" id="246200"/>
    <lineage>
        <taxon>Bacteria</taxon>
        <taxon>Pseudomonadati</taxon>
        <taxon>Pseudomonadota</taxon>
        <taxon>Alphaproteobacteria</taxon>
        <taxon>Rhodobacterales</taxon>
        <taxon>Roseobacteraceae</taxon>
        <taxon>Ruegeria</taxon>
    </lineage>
</organism>
<feature type="chain" id="PRO_0000375750" description="Succinyl-diaminopimelate desuccinylase">
    <location>
        <begin position="1"/>
        <end position="380"/>
    </location>
</feature>
<feature type="active site" evidence="1">
    <location>
        <position position="71"/>
    </location>
</feature>
<feature type="active site" description="Proton acceptor" evidence="1">
    <location>
        <position position="135"/>
    </location>
</feature>
<feature type="binding site" evidence="1">
    <location>
        <position position="69"/>
    </location>
    <ligand>
        <name>Zn(2+)</name>
        <dbReference type="ChEBI" id="CHEBI:29105"/>
        <label>1</label>
    </ligand>
</feature>
<feature type="binding site" evidence="1">
    <location>
        <position position="102"/>
    </location>
    <ligand>
        <name>Zn(2+)</name>
        <dbReference type="ChEBI" id="CHEBI:29105"/>
        <label>1</label>
    </ligand>
</feature>
<feature type="binding site" evidence="1">
    <location>
        <position position="102"/>
    </location>
    <ligand>
        <name>Zn(2+)</name>
        <dbReference type="ChEBI" id="CHEBI:29105"/>
        <label>2</label>
    </ligand>
</feature>
<feature type="binding site" evidence="1">
    <location>
        <position position="136"/>
    </location>
    <ligand>
        <name>Zn(2+)</name>
        <dbReference type="ChEBI" id="CHEBI:29105"/>
        <label>2</label>
    </ligand>
</feature>
<feature type="binding site" evidence="1">
    <location>
        <position position="164"/>
    </location>
    <ligand>
        <name>Zn(2+)</name>
        <dbReference type="ChEBI" id="CHEBI:29105"/>
        <label>1</label>
    </ligand>
</feature>
<feature type="binding site" evidence="1">
    <location>
        <position position="353"/>
    </location>
    <ligand>
        <name>Zn(2+)</name>
        <dbReference type="ChEBI" id="CHEBI:29105"/>
        <label>2</label>
    </ligand>
</feature>
<name>DAPE_RUEPO</name>